<sequence>MLSVQLITPSSHGTAHLPRDDTDAAAGEILEFLCPFFCIGGIGDEYCDCQEKRDLDLFTDQ</sequence>
<reference key="1">
    <citation type="journal article" date="2019" name="J. Proteomics">
        <title>Cone snail prolyl-4-hydroxylase alpha-subunit sequences derived from transcriptomic data and mass spectrometric analysis of variable proline hydroxylation in C. amadis venom.</title>
        <authorList>
            <person name="Vijayasarathy M."/>
            <person name="Balaram P."/>
        </authorList>
    </citation>
    <scope>NUCLEOTIDE SEQUENCE [MRNA]</scope>
    <scope>PROTEIN SEQUENCE OF 20-51</scope>
    <scope>SUBCELLULAR LOCATION</scope>
    <scope>IDENTIFICATION BY MASS SPECTROMETRY</scope>
    <source>
        <tissue>Venom</tissue>
        <tissue>Venom duct</tissue>
    </source>
</reference>
<dbReference type="EMBL" id="MH282826">
    <property type="protein sequence ID" value="AYP73033.1"/>
    <property type="molecule type" value="mRNA"/>
</dbReference>
<dbReference type="GO" id="GO:0005576">
    <property type="term" value="C:extracellular region"/>
    <property type="evidence" value="ECO:0007669"/>
    <property type="project" value="UniProtKB-SubCell"/>
</dbReference>
<dbReference type="GO" id="GO:0099106">
    <property type="term" value="F:ion channel regulator activity"/>
    <property type="evidence" value="ECO:0007669"/>
    <property type="project" value="UniProtKB-KW"/>
</dbReference>
<dbReference type="GO" id="GO:0090729">
    <property type="term" value="F:toxin activity"/>
    <property type="evidence" value="ECO:0007669"/>
    <property type="project" value="UniProtKB-KW"/>
</dbReference>
<feature type="propeptide" id="PRO_0000453607" evidence="2">
    <location>
        <begin position="1" status="less than"/>
        <end position="19"/>
    </location>
</feature>
<feature type="peptide" id="PRO_0000453608" description="Conotoxin Am14.1" evidence="1">
    <location>
        <begin position="20"/>
        <end position="51"/>
    </location>
</feature>
<feature type="propeptide" id="PRO_0000453609" evidence="3">
    <location>
        <begin position="52"/>
        <end position="61"/>
    </location>
</feature>
<feature type="non-terminal residue" evidence="2">
    <location>
        <position position="1"/>
    </location>
</feature>
<protein>
    <recommendedName>
        <fullName evidence="2">Conotoxin Am14.1</fullName>
    </recommendedName>
</protein>
<organism>
    <name type="scientific">Conus amadis</name>
    <name type="common">Amadis cone</name>
    <dbReference type="NCBI Taxonomy" id="198732"/>
    <lineage>
        <taxon>Eukaryota</taxon>
        <taxon>Metazoa</taxon>
        <taxon>Spiralia</taxon>
        <taxon>Lophotrochozoa</taxon>
        <taxon>Mollusca</taxon>
        <taxon>Gastropoda</taxon>
        <taxon>Caenogastropoda</taxon>
        <taxon>Neogastropoda</taxon>
        <taxon>Conoidea</taxon>
        <taxon>Conidae</taxon>
        <taxon>Conus</taxon>
        <taxon>Leptoconus</taxon>
    </lineage>
</organism>
<proteinExistence type="evidence at protein level"/>
<keyword id="KW-0165">Cleavage on pair of basic residues</keyword>
<keyword id="KW-0903">Direct protein sequencing</keyword>
<keyword id="KW-1015">Disulfide bond</keyword>
<keyword id="KW-0872">Ion channel impairing toxin</keyword>
<keyword id="KW-0964">Secreted</keyword>
<keyword id="KW-0800">Toxin</keyword>
<evidence type="ECO:0000269" key="1">
    <source>
    </source>
</evidence>
<evidence type="ECO:0000305" key="2"/>
<evidence type="ECO:0000305" key="3">
    <source>
    </source>
</evidence>
<name>CU141_CONAA</name>
<accession>A0A3G3C7T2</accession>
<comment type="function">
    <text evidence="2">Probable toxin that inhibits ion channels.</text>
</comment>
<comment type="subcellular location">
    <subcellularLocation>
        <location evidence="1">Secreted</location>
    </subcellularLocation>
</comment>
<comment type="tissue specificity">
    <text evidence="3">Expressed by the venom duct.</text>
</comment>
<comment type="domain">
    <text evidence="2">The cysteine framework is XIV (C-C-C-C).</text>
</comment>
<comment type="PTM">
    <text evidence="1">Mostly non-hydroxylated.</text>
</comment>
<comment type="PTM">
    <text evidence="2">Contains 2 disulfide bonds.</text>
</comment>